<organism>
    <name type="scientific">Cochliobolus heterostrophus (strain C4 / ATCC 48331 / race T)</name>
    <name type="common">Southern corn leaf blight fungus</name>
    <name type="synonym">Bipolaris maydis</name>
    <dbReference type="NCBI Taxonomy" id="665024"/>
    <lineage>
        <taxon>Eukaryota</taxon>
        <taxon>Fungi</taxon>
        <taxon>Dikarya</taxon>
        <taxon>Ascomycota</taxon>
        <taxon>Pezizomycotina</taxon>
        <taxon>Dothideomycetes</taxon>
        <taxon>Pleosporomycetidae</taxon>
        <taxon>Pleosporales</taxon>
        <taxon>Pleosporineae</taxon>
        <taxon>Pleosporaceae</taxon>
        <taxon>Bipolaris</taxon>
    </lineage>
</organism>
<gene>
    <name evidence="3" type="primary">ATG8</name>
    <name type="ORF">COCC4DRAFT_59348</name>
</gene>
<proteinExistence type="inferred from homology"/>
<comment type="function">
    <text evidence="1 2">Ubiquitin-like modifier involved in cytoplasm to vacuole transport (Cvt) vesicles and autophagosome formation (PubMed:28800850). With ATG4, mediates the delivery of the vesicles and autophagosomes to the vacuole via the microtubule cytoskeleton (By similarity). Required for selective autophagic degradation of the nucleus (nucleophagy) as well as for mitophagy which contributes to regulate mitochondrial quantity and quality by eliminating the mitochondria to a basal level to fulfill cellular energy requirements and preventing excess ROS production (By similarity). Also participates in membrane fusion events that take place in the early secretory pathway (By similarity). Also involved in endoplasmic reticulum-specific autophagic process and is essential for the survival of cells subjected to severe ER stress (By similarity). The ATG8-PE conjugate mediates tethering between adjacent membranes and stimulates membrane hemifusion, leading to expansion of the autophagosomal membrane during autophagy (By similarity). Moreover not only conjugation, but also subsequent ATG8-PE deconjugation is an important step required to facilitate multiple events during macroautophagy, and especially for efficient autophagosome biogenesis, the assembly of ATG9-containing tubulovesicular clusters into phagophores/autophagosomes, and for the disassembly of PAS-associated ATG components (By similarity). Autophagy is required for conidiation, aerial mycelial growth, and pseudothecia formation, but not for host invasion (PubMed:28800850).</text>
</comment>
<comment type="subunit">
    <text evidence="1">Conjugation to phosphatidylethanolamine (PE) leads to homodimerization (By similarity). Interacts with ATG1, ATG3, ATG4, ATG7 and ATG12 (By similarity).</text>
</comment>
<comment type="subcellular location">
    <subcellularLocation>
        <location evidence="1">Cytoplasmic vesicle</location>
        <location evidence="1">Cvt vesicle membrane</location>
        <topology evidence="1">Lipid-anchor</topology>
    </subcellularLocation>
    <subcellularLocation>
        <location evidence="1">Cytoplasmic vesicle</location>
        <location evidence="1">Autophagosome membrane</location>
        <topology evidence="1">Lipid-anchor</topology>
    </subcellularLocation>
    <subcellularLocation>
        <location evidence="1">Vacuole membrane</location>
        <topology evidence="1">Lipid-anchor</topology>
    </subcellularLocation>
    <text evidence="1">Membrane-associated through a lipid anchor (By similarity). This association needs the 2 ubiquitin-like systems required for cytoplasm to vacuole transport and autophagy (By similarity). Localizes to both the isolation membrane (IM) and the vacuole-isolation membrane contact site (VICS) during IM expansion (By similarity). The IM is a membrane sac generated from the pre-autophagosomal structure that ultimately expands to become a mature autophagosome (By similarity).</text>
</comment>
<comment type="PTM">
    <text evidence="1">The C-terminal Glu-117, Ala-118 and Leu-119 residues of ATG8 are removed by ATG4 to expose Gly-116 at the C-terminus (By similarity). This Gly-116 forms then a thioester bond with ATG7 (E1-like activating enzyme) before being transferred to ATG3 (the specific E2 conjugating enzyme), in order to be finally amidated with phosphatidylethanolamine (By similarity). This lipid modification anchors ATG8 to membranes and can be reversed by ATG4, releasing soluble ATG8 (By similarity).</text>
</comment>
<comment type="disruption phenotype">
    <text evidence="2">Leads to deficient autophagy (PubMed:28800850). Impairs conidial germination under starvation conditions, conidial longevity, and ascospore maturation (PubMed:28800850).</text>
</comment>
<comment type="similarity">
    <text evidence="4">Belongs to the ATG8 family.</text>
</comment>
<reference key="1">
    <citation type="journal article" date="2012" name="PLoS Pathog.">
        <title>Diverse lifestyles and strategies of plant pathogenesis encoded in the genomes of eighteen Dothideomycetes fungi.</title>
        <authorList>
            <person name="Ohm R.A."/>
            <person name="Feau N."/>
            <person name="Henrissat B."/>
            <person name="Schoch C.L."/>
            <person name="Horwitz B.A."/>
            <person name="Barry K.W."/>
            <person name="Condon B.J."/>
            <person name="Copeland A.C."/>
            <person name="Dhillon B."/>
            <person name="Glaser F."/>
            <person name="Hesse C.N."/>
            <person name="Kosti I."/>
            <person name="LaButti K."/>
            <person name="Lindquist E.A."/>
            <person name="Lucas S."/>
            <person name="Salamov A.A."/>
            <person name="Bradshaw R.E."/>
            <person name="Ciuffetti L."/>
            <person name="Hamelin R.C."/>
            <person name="Kema G.H.J."/>
            <person name="Lawrence C."/>
            <person name="Scott J.A."/>
            <person name="Spatafora J.W."/>
            <person name="Turgeon B.G."/>
            <person name="de Wit P.J.G.M."/>
            <person name="Zhong S."/>
            <person name="Goodwin S.B."/>
            <person name="Grigoriev I.V."/>
        </authorList>
    </citation>
    <scope>NUCLEOTIDE SEQUENCE [LARGE SCALE GENOMIC DNA]</scope>
    <source>
        <strain>C4 / ATCC 48331 / race T</strain>
    </source>
</reference>
<reference key="2">
    <citation type="journal article" date="2013" name="PLoS Genet.">
        <title>Comparative genome structure, secondary metabolite, and effector coding capacity across Cochliobolus pathogens.</title>
        <authorList>
            <person name="Condon B.J."/>
            <person name="Leng Y."/>
            <person name="Wu D."/>
            <person name="Bushley K.E."/>
            <person name="Ohm R.A."/>
            <person name="Otillar R."/>
            <person name="Martin J."/>
            <person name="Schackwitz W."/>
            <person name="Grimwood J."/>
            <person name="MohdZainudin N."/>
            <person name="Xue C."/>
            <person name="Wang R."/>
            <person name="Manning V.A."/>
            <person name="Dhillon B."/>
            <person name="Tu Z.J."/>
            <person name="Steffenson B.J."/>
            <person name="Salamov A."/>
            <person name="Sun H."/>
            <person name="Lowry S."/>
            <person name="LaButti K."/>
            <person name="Han J."/>
            <person name="Copeland A."/>
            <person name="Lindquist E."/>
            <person name="Barry K."/>
            <person name="Schmutz J."/>
            <person name="Baker S.E."/>
            <person name="Ciuffetti L.M."/>
            <person name="Grigoriev I.V."/>
            <person name="Zhong S."/>
            <person name="Turgeon B.G."/>
        </authorList>
    </citation>
    <scope>NUCLEOTIDE SEQUENCE [LARGE SCALE GENOMIC DNA]</scope>
    <source>
        <strain>C4 / ATCC 48331 / race T</strain>
    </source>
</reference>
<reference key="3">
    <citation type="journal article" date="2017" name="Fungal Biol.">
        <title>Characterization of the autophagy-related gene BmATG8 in Bipolaris maydis.</title>
        <authorList>
            <person name="Sumita T."/>
            <person name="Izumitsu K."/>
            <person name="Tanaka C."/>
        </authorList>
    </citation>
    <scope>FUNCTION</scope>
    <scope>DISRUPTION PHENOTYPE</scope>
</reference>
<keyword id="KW-0072">Autophagy</keyword>
<keyword id="KW-0968">Cytoplasmic vesicle</keyword>
<keyword id="KW-0449">Lipoprotein</keyword>
<keyword id="KW-0472">Membrane</keyword>
<keyword id="KW-0653">Protein transport</keyword>
<keyword id="KW-0813">Transport</keyword>
<keyword id="KW-0926">Vacuole</keyword>
<sequence>MRSKFKDEHPFEKRKAEAERIRQKYNDRIPVICEKVEKSDIATIDKKKYLVPADLTVGQFVYVIRKRIKLSPEKAIFIFVDEVLPPTAALMSSIYEEHKDEDGFLYITYSGENTFGEAL</sequence>
<dbReference type="EMBL" id="KB733451">
    <property type="protein sequence ID" value="ENI06684.1"/>
    <property type="molecule type" value="Genomic_DNA"/>
</dbReference>
<dbReference type="RefSeq" id="XP_014080593.1">
    <property type="nucleotide sequence ID" value="XM_014225118.1"/>
</dbReference>
<dbReference type="SMR" id="N4X184"/>
<dbReference type="GeneID" id="25846339"/>
<dbReference type="HOGENOM" id="CLU_119276_0_1_1"/>
<dbReference type="OrthoDB" id="6738456at2759"/>
<dbReference type="PHI-base" id="PHI:11787"/>
<dbReference type="Proteomes" id="UP000012338">
    <property type="component" value="Unassembled WGS sequence"/>
</dbReference>
<dbReference type="GO" id="GO:0000421">
    <property type="term" value="C:autophagosome membrane"/>
    <property type="evidence" value="ECO:0007669"/>
    <property type="project" value="UniProtKB-SubCell"/>
</dbReference>
<dbReference type="GO" id="GO:0033110">
    <property type="term" value="C:Cvt vesicle membrane"/>
    <property type="evidence" value="ECO:0007669"/>
    <property type="project" value="UniProtKB-SubCell"/>
</dbReference>
<dbReference type="GO" id="GO:0006914">
    <property type="term" value="P:autophagy"/>
    <property type="evidence" value="ECO:0007669"/>
    <property type="project" value="UniProtKB-KW"/>
</dbReference>
<dbReference type="GO" id="GO:0015031">
    <property type="term" value="P:protein transport"/>
    <property type="evidence" value="ECO:0007669"/>
    <property type="project" value="UniProtKB-KW"/>
</dbReference>
<dbReference type="CDD" id="cd16128">
    <property type="entry name" value="Ubl_ATG8"/>
    <property type="match status" value="1"/>
</dbReference>
<dbReference type="FunFam" id="3.10.20.90:FF:000010">
    <property type="entry name" value="Autophagy-related protein"/>
    <property type="match status" value="1"/>
</dbReference>
<dbReference type="Gene3D" id="3.10.20.90">
    <property type="entry name" value="Phosphatidylinositol 3-kinase Catalytic Subunit, Chain A, domain 1"/>
    <property type="match status" value="1"/>
</dbReference>
<dbReference type="InterPro" id="IPR004241">
    <property type="entry name" value="Atg8-like"/>
</dbReference>
<dbReference type="InterPro" id="IPR029071">
    <property type="entry name" value="Ubiquitin-like_domsf"/>
</dbReference>
<dbReference type="PANTHER" id="PTHR10969">
    <property type="entry name" value="MICROTUBULE-ASSOCIATED PROTEINS 1A/1B LIGHT CHAIN 3-RELATED"/>
    <property type="match status" value="1"/>
</dbReference>
<dbReference type="Pfam" id="PF02991">
    <property type="entry name" value="ATG8"/>
    <property type="match status" value="1"/>
</dbReference>
<dbReference type="SUPFAM" id="SSF54236">
    <property type="entry name" value="Ubiquitin-like"/>
    <property type="match status" value="1"/>
</dbReference>
<feature type="chain" id="PRO_0000443887" description="Autophagy-related protein 8">
    <location>
        <begin position="1"/>
        <end position="119"/>
    </location>
</feature>
<feature type="propeptide" id="PRO_0000443888" description="Removed in mature form" evidence="1">
    <location>
        <begin position="117"/>
        <end position="119"/>
    </location>
</feature>
<feature type="site" description="Cleavage; by ATG4" evidence="1">
    <location>
        <begin position="116"/>
        <end position="117"/>
    </location>
</feature>
<feature type="lipid moiety-binding region" description="Phosphatidylethanolamine amidated glycine" evidence="1">
    <location>
        <position position="116"/>
    </location>
</feature>
<accession>N4X184</accession>
<protein>
    <recommendedName>
        <fullName evidence="3">Autophagy-related protein 8</fullName>
    </recommendedName>
    <alternativeName>
        <fullName evidence="1">Autophagy-related ubiquitin-like modifier ATG8</fullName>
    </alternativeName>
</protein>
<evidence type="ECO:0000250" key="1">
    <source>
        <dbReference type="UniProtKB" id="P38182"/>
    </source>
</evidence>
<evidence type="ECO:0000269" key="2">
    <source>
    </source>
</evidence>
<evidence type="ECO:0000303" key="3">
    <source>
    </source>
</evidence>
<evidence type="ECO:0000305" key="4"/>
<name>ATG8_COCH4</name>